<dbReference type="EMBL" id="U63407">
    <property type="protein sequence ID" value="AAD22568.1"/>
    <property type="molecule type" value="mRNA"/>
</dbReference>
<dbReference type="EMBL" id="U63408">
    <property type="protein sequence ID" value="AAD22569.1"/>
    <property type="status" value="ALT_FRAME"/>
    <property type="molecule type" value="mRNA"/>
</dbReference>
<dbReference type="EMBL" id="AK157169">
    <property type="protein sequence ID" value="BAE33986.1"/>
    <property type="molecule type" value="mRNA"/>
</dbReference>
<dbReference type="EMBL" id="AC159206">
    <property type="status" value="NOT_ANNOTATED_CDS"/>
    <property type="molecule type" value="Genomic_DNA"/>
</dbReference>
<dbReference type="CCDS" id="CCDS21749.1">
    <molecule id="Q9WUX5-2"/>
</dbReference>
<dbReference type="RefSeq" id="NP_919446.2">
    <molecule id="Q9WUX5-2"/>
    <property type="nucleotide sequence ID" value="NM_194464.3"/>
</dbReference>
<dbReference type="RefSeq" id="XP_006507478.1">
    <molecule id="Q9WUX5-2"/>
    <property type="nucleotide sequence ID" value="XM_006507415.4"/>
</dbReference>
<dbReference type="RefSeq" id="XP_006507479.1">
    <molecule id="Q9WUX5-2"/>
    <property type="nucleotide sequence ID" value="XM_006507416.3"/>
</dbReference>
<dbReference type="SMR" id="Q9WUX5"/>
<dbReference type="FunCoup" id="Q9WUX5">
    <property type="interactions" value="224"/>
</dbReference>
<dbReference type="STRING" id="10090.ENSMUSP00000114578"/>
<dbReference type="GlyGen" id="Q9WUX5">
    <property type="glycosylation" value="1 site, 1 O-linked glycan (1 site)"/>
</dbReference>
<dbReference type="iPTMnet" id="Q9WUX5"/>
<dbReference type="PhosphoSitePlus" id="Q9WUX5"/>
<dbReference type="jPOST" id="Q9WUX5"/>
<dbReference type="PaxDb" id="10090-ENSMUSP00000114578"/>
<dbReference type="ProteomicsDB" id="295592">
    <molecule id="Q9WUX5-1"/>
</dbReference>
<dbReference type="ProteomicsDB" id="295593">
    <molecule id="Q9WUX5-2"/>
</dbReference>
<dbReference type="Antibodypedia" id="2234">
    <property type="antibodies" value="27 antibodies from 12 providers"/>
</dbReference>
<dbReference type="DNASU" id="17540"/>
<dbReference type="Ensembl" id="ENSMUST00000005751.13">
    <molecule id="Q9WUX5-2"/>
    <property type="protein sequence ID" value="ENSMUSP00000005751.7"/>
    <property type="gene ID" value="ENSMUSG00000005611.16"/>
</dbReference>
<dbReference type="GeneID" id="17540"/>
<dbReference type="UCSC" id="uc009jfs.2">
    <molecule id="Q9WUX5-1"/>
    <property type="organism name" value="mouse"/>
</dbReference>
<dbReference type="AGR" id="MGI:1338023"/>
<dbReference type="CTD" id="10335"/>
<dbReference type="MGI" id="MGI:1338023">
    <property type="gene designation" value="Irag1"/>
</dbReference>
<dbReference type="VEuPathDB" id="HostDB:ENSMUSG00000005611"/>
<dbReference type="eggNOG" id="ENOG502QWGQ">
    <property type="taxonomic scope" value="Eukaryota"/>
</dbReference>
<dbReference type="GeneTree" id="ENSGT00530000063722"/>
<dbReference type="InParanoid" id="Q9WUX5"/>
<dbReference type="PhylomeDB" id="Q9WUX5"/>
<dbReference type="Reactome" id="R-MMU-418457">
    <property type="pathway name" value="cGMP effects"/>
</dbReference>
<dbReference type="BioGRID-ORCS" id="17540">
    <property type="hits" value="5 hits in 77 CRISPR screens"/>
</dbReference>
<dbReference type="ChiTaRS" id="Mrvi1">
    <property type="organism name" value="mouse"/>
</dbReference>
<dbReference type="PRO" id="PR:Q9WUX5"/>
<dbReference type="Proteomes" id="UP000000589">
    <property type="component" value="Chromosome 7"/>
</dbReference>
<dbReference type="RNAct" id="Q9WUX5">
    <property type="molecule type" value="protein"/>
</dbReference>
<dbReference type="Bgee" id="ENSMUSG00000005611">
    <property type="expression patterns" value="Expressed in ascending aorta and 206 other cell types or tissues"/>
</dbReference>
<dbReference type="ExpressionAtlas" id="Q9WUX5">
    <property type="expression patterns" value="baseline and differential"/>
</dbReference>
<dbReference type="GO" id="GO:0016020">
    <property type="term" value="C:membrane"/>
    <property type="evidence" value="ECO:0007669"/>
    <property type="project" value="UniProtKB-SubCell"/>
</dbReference>
<dbReference type="GO" id="GO:0048471">
    <property type="term" value="C:perinuclear region of cytoplasm"/>
    <property type="evidence" value="ECO:0007669"/>
    <property type="project" value="UniProtKB-SubCell"/>
</dbReference>
<dbReference type="GO" id="GO:0016529">
    <property type="term" value="C:sarcoplasmic reticulum"/>
    <property type="evidence" value="ECO:0007669"/>
    <property type="project" value="UniProtKB-SubCell"/>
</dbReference>
<dbReference type="GO" id="GO:0019934">
    <property type="term" value="P:cGMP-mediated signaling"/>
    <property type="evidence" value="ECO:0000315"/>
    <property type="project" value="MGI"/>
</dbReference>
<dbReference type="GO" id="GO:0045986">
    <property type="term" value="P:negative regulation of smooth muscle contraction"/>
    <property type="evidence" value="ECO:0000315"/>
    <property type="project" value="MGI"/>
</dbReference>
<dbReference type="GO" id="GO:0060087">
    <property type="term" value="P:relaxation of vascular associated smooth muscle"/>
    <property type="evidence" value="ECO:0000315"/>
    <property type="project" value="MGI"/>
</dbReference>
<dbReference type="InterPro" id="IPR008677">
    <property type="entry name" value="MRVI1"/>
</dbReference>
<dbReference type="PANTHER" id="PTHR15352:SF2">
    <property type="entry name" value="INOSITOL 1,4,5-TRIPHOSPHATE RECEPTOR ASSOCIATED 1"/>
    <property type="match status" value="1"/>
</dbReference>
<dbReference type="PANTHER" id="PTHR15352">
    <property type="entry name" value="LYMPHOID-RESTRICTED MEMBRANE PROTEIN, JAW1"/>
    <property type="match status" value="1"/>
</dbReference>
<dbReference type="Pfam" id="PF05781">
    <property type="entry name" value="MRVI1"/>
    <property type="match status" value="1"/>
</dbReference>
<comment type="function">
    <text evidence="5 6 7 9 10">Plays a role as NO/PRKG1-dependent regulator of IP3-induced calcium release; its phosphorylation by PRKG1 inhibits bradykinin and IP3-induced calcium release from intracellular stores. Recruits PRKG1 to the endoplasmic reticulum and may mediate the assembly of PRKG1 and ITPR1 in a macrocomplex. Involved in PRKG1 signaling cascade leading to inhibition of platelet activation and aggregation. Also mediates NO-dependent inhibition of calcium signaling in gastrointestinal smooth muscle contributing to NO-dependent relaxation. Plays a role in the regulation of cellular excitability by regulating the hyperpolarization-activated cyclic nucleotide-gated HCN4 channel activity (PubMed:32647060).</text>
</comment>
<comment type="subunit">
    <text evidence="1 9 10">Part of cGMP kinase signaling complex at least composed of ACTA2/alpha-actin, CNN1/calponin H1, PLN/phospholamban, PRKG1 and ITPR1 (By similarity). Interacts with PRKG1/cGKI-beta and ITPR1/IP3R type I. Interacts with HCN4; regulates HCN4 channel activity (PubMed:32647060).</text>
</comment>
<comment type="subcellular location">
    <subcellularLocation>
        <location evidence="13">Membrane</location>
        <topology evidence="13">Single-pass membrane protein</topology>
    </subcellularLocation>
    <subcellularLocation>
        <location evidence="6">Cytoplasm</location>
        <location evidence="6">Perinuclear region</location>
    </subcellularLocation>
    <subcellularLocation>
        <location evidence="6">Sarcoplasmic reticulum</location>
    </subcellularLocation>
</comment>
<comment type="alternative products">
    <event type="alternative splicing"/>
    <isoform>
        <id>Q9WUX5-1</id>
        <name>1</name>
        <name>IRAG1a</name>
        <sequence type="displayed"/>
    </isoform>
    <isoform>
        <id>Q9WUX5-2</id>
        <name>2</name>
        <sequence type="described" ref="VSP_028343"/>
    </isoform>
</comment>
<comment type="tissue specificity">
    <text evidence="5 6 8">Highly expressed in smooth muscle such as aorta, colon and uterus. Detected in the brain, in the thalamus, in the hippocampus and myenteric plexus. Highly expressed in megakaryocytes. Down-regulated during macrophage differentiation.</text>
</comment>
<comment type="PTM">
    <text evidence="1">Phosphorylated by PRKG1/cGKI.</text>
</comment>
<comment type="disruption phenotype">
    <text evidence="7 9">Mice lacking coiled-coil region N-terminal part exhibit disruption of IRAG1-ITPR1 interaction. They have dilated gastrointestinal tract and disturbed gastrointestinal motility. Smooth muscle are no more relaxed by cGMP after phenilephrine-induced contraction and half of the homozygous mice dies before the age of 6 months. Nitric oxide (NO) and cGMP-mediated inhibition of collagen-induced platelet aggregation is strongly suppressed in platelets of these transgenic mice. growth.</text>
</comment>
<comment type="miscellaneous">
    <text>IRAG1 gene is a common integration site of murine leukemia virus, leading to induce myeloid leukemia in BXH2 mice. Murine leukemia virus integration occurs at the 5' end of the gene between 2 differentially used promoters and thus probably alters the expression of an important gene for myeloid cell growth.</text>
</comment>
<comment type="sequence caution" evidence="13">
    <conflict type="frameshift">
        <sequence resource="EMBL-CDS" id="AAD22569"/>
    </conflict>
</comment>
<proteinExistence type="evidence at protein level"/>
<feature type="chain" id="PRO_0000305293" description="Inositol 1,4,5-triphosphate receptor associated 1">
    <location>
        <begin position="1"/>
        <end position="899"/>
    </location>
</feature>
<feature type="transmembrane region" description="Helical" evidence="3">
    <location>
        <begin position="839"/>
        <end position="859"/>
    </location>
</feature>
<feature type="region of interest" description="Disordered" evidence="4">
    <location>
        <begin position="32"/>
        <end position="110"/>
    </location>
</feature>
<feature type="region of interest" description="Interaction with PRKG1" evidence="1">
    <location>
        <begin position="140"/>
        <end position="172"/>
    </location>
</feature>
<feature type="region of interest" description="Disordered" evidence="4">
    <location>
        <begin position="164"/>
        <end position="286"/>
    </location>
</feature>
<feature type="region of interest" description="Disordered" evidence="4">
    <location>
        <begin position="324"/>
        <end position="391"/>
    </location>
</feature>
<feature type="region of interest" description="Disordered" evidence="4">
    <location>
        <begin position="463"/>
        <end position="486"/>
    </location>
</feature>
<feature type="region of interest" description="Interaction with ITPR1" evidence="9">
    <location>
        <begin position="521"/>
        <end position="567"/>
    </location>
</feature>
<feature type="region of interest" description="Disordered" evidence="4">
    <location>
        <begin position="695"/>
        <end position="722"/>
    </location>
</feature>
<feature type="region of interest" description="Disordered" evidence="4">
    <location>
        <begin position="757"/>
        <end position="818"/>
    </location>
</feature>
<feature type="region of interest" description="Disordered" evidence="4">
    <location>
        <begin position="867"/>
        <end position="899"/>
    </location>
</feature>
<feature type="coiled-coil region" evidence="3">
    <location>
        <begin position="534"/>
        <end position="632"/>
    </location>
</feature>
<feature type="compositionally biased region" description="Basic residues" evidence="4">
    <location>
        <begin position="100"/>
        <end position="110"/>
    </location>
</feature>
<feature type="compositionally biased region" description="Polar residues" evidence="4">
    <location>
        <begin position="171"/>
        <end position="180"/>
    </location>
</feature>
<feature type="compositionally biased region" description="Low complexity" evidence="4">
    <location>
        <begin position="181"/>
        <end position="203"/>
    </location>
</feature>
<feature type="compositionally biased region" description="Basic and acidic residues" evidence="4">
    <location>
        <begin position="266"/>
        <end position="281"/>
    </location>
</feature>
<feature type="compositionally biased region" description="Polar residues" evidence="4">
    <location>
        <begin position="333"/>
        <end position="351"/>
    </location>
</feature>
<feature type="compositionally biased region" description="Low complexity" evidence="4">
    <location>
        <begin position="699"/>
        <end position="715"/>
    </location>
</feature>
<feature type="compositionally biased region" description="Basic and acidic residues" evidence="4">
    <location>
        <begin position="759"/>
        <end position="770"/>
    </location>
</feature>
<feature type="compositionally biased region" description="Basic and acidic residues" evidence="4">
    <location>
        <begin position="777"/>
        <end position="787"/>
    </location>
</feature>
<feature type="compositionally biased region" description="Acidic residues" evidence="4">
    <location>
        <begin position="788"/>
        <end position="814"/>
    </location>
</feature>
<feature type="compositionally biased region" description="Polar residues" evidence="4">
    <location>
        <begin position="876"/>
        <end position="892"/>
    </location>
</feature>
<feature type="modified residue" description="Phosphoserine" evidence="2">
    <location>
        <position position="106"/>
    </location>
</feature>
<feature type="modified residue" description="Phosphoserine" evidence="14">
    <location>
        <position position="382"/>
    </location>
</feature>
<feature type="modified residue" description="Phosphoserine" evidence="2">
    <location>
        <position position="670"/>
    </location>
</feature>
<feature type="modified residue" description="Phosphoserine" evidence="2">
    <location>
        <position position="683"/>
    </location>
</feature>
<feature type="splice variant" id="VSP_028343" description="In isoform 2." evidence="11 12">
    <location>
        <begin position="1"/>
        <end position="43"/>
    </location>
</feature>
<feature type="sequence conflict" description="In Ref. 1; AAD22569." evidence="13" ref="1">
    <original>I</original>
    <variation>V</variation>
    <location>
        <position position="11"/>
    </location>
</feature>
<feature type="sequence conflict" description="In Ref. 2; BAE33986." evidence="13" ref="2">
    <original>S</original>
    <variation>P</variation>
    <location>
        <position position="203"/>
    </location>
</feature>
<feature type="sequence conflict" description="In Ref. 1; AAD22568/AAD22569." evidence="13" ref="1">
    <original>L</original>
    <variation>G</variation>
    <location>
        <position position="206"/>
    </location>
</feature>
<feature type="sequence conflict" description="In Ref. 1; AAD22568/AAD22569." evidence="13" ref="1">
    <original>C</original>
    <variation>W</variation>
    <location>
        <position position="209"/>
    </location>
</feature>
<feature type="sequence conflict" description="In Ref. 2; BAE33986." evidence="13" ref="2">
    <original>P</original>
    <variation>L</variation>
    <location>
        <position position="220"/>
    </location>
</feature>
<feature type="sequence conflict" description="In Ref. 1; AAD22568/AAD22569." evidence="13" ref="1">
    <original>K</original>
    <variation>R</variation>
    <location>
        <position position="224"/>
    </location>
</feature>
<feature type="sequence conflict" description="In Ref. 2; BAE33986." evidence="13" ref="2">
    <original>P</original>
    <variation>L</variation>
    <location>
        <position position="235"/>
    </location>
</feature>
<feature type="sequence conflict" description="In Ref. 2; BAE33986." evidence="13" ref="2">
    <original>L</original>
    <variation>P</variation>
    <location>
        <position position="349"/>
    </location>
</feature>
<feature type="sequence conflict" description="In Ref. 1; AAD22568/AAD22569." evidence="13" ref="1">
    <original>A</original>
    <variation>S</variation>
    <location>
        <position position="647"/>
    </location>
</feature>
<feature type="sequence conflict" description="In Ref. 1; AAD22568/AAD22569." evidence="13" ref="1">
    <original>L</original>
    <variation>G</variation>
    <location>
        <position position="731"/>
    </location>
</feature>
<feature type="sequence conflict" description="In Ref. 1; AAD22568/AAD22569." evidence="13" ref="1">
    <original>A</original>
    <variation>E</variation>
    <location>
        <position position="738"/>
    </location>
</feature>
<feature type="sequence conflict" description="In Ref. 2; BAE33986." evidence="13" ref="2">
    <original>G</original>
    <variation>E</variation>
    <location>
        <position position="773"/>
    </location>
</feature>
<protein>
    <recommendedName>
        <fullName evidence="13">Inositol 1,4,5-triphosphate receptor associated 1</fullName>
    </recommendedName>
    <alternativeName>
        <fullName>Inositol 1,4,5-trisphosphate receptor-associated cGMP kinase substrate</fullName>
    </alternativeName>
    <alternativeName>
        <fullName>JAW1-related protein MRVI1</fullName>
    </alternativeName>
    <alternativeName>
        <fullName>Murine retrovirus integration site 1 protein</fullName>
    </alternativeName>
    <alternativeName>
        <fullName>Protein MRVI1</fullName>
    </alternativeName>
</protein>
<name>IRAG1_MOUSE</name>
<keyword id="KW-0025">Alternative splicing</keyword>
<keyword id="KW-0175">Coiled coil</keyword>
<keyword id="KW-0963">Cytoplasm</keyword>
<keyword id="KW-0472">Membrane</keyword>
<keyword id="KW-0597">Phosphoprotein</keyword>
<keyword id="KW-1185">Reference proteome</keyword>
<keyword id="KW-0703">Sarcoplasmic reticulum</keyword>
<keyword id="KW-0812">Transmembrane</keyword>
<keyword id="KW-1133">Transmembrane helix</keyword>
<gene>
    <name type="primary">Irag1</name>
    <name type="synonym">Irag</name>
    <name type="synonym">Mrvi1</name>
</gene>
<organism>
    <name type="scientific">Mus musculus</name>
    <name type="common">Mouse</name>
    <dbReference type="NCBI Taxonomy" id="10090"/>
    <lineage>
        <taxon>Eukaryota</taxon>
        <taxon>Metazoa</taxon>
        <taxon>Chordata</taxon>
        <taxon>Craniata</taxon>
        <taxon>Vertebrata</taxon>
        <taxon>Euteleostomi</taxon>
        <taxon>Mammalia</taxon>
        <taxon>Eutheria</taxon>
        <taxon>Euarchontoglires</taxon>
        <taxon>Glires</taxon>
        <taxon>Rodentia</taxon>
        <taxon>Myomorpha</taxon>
        <taxon>Muroidea</taxon>
        <taxon>Muridae</taxon>
        <taxon>Murinae</taxon>
        <taxon>Mus</taxon>
        <taxon>Mus</taxon>
    </lineage>
</organism>
<evidence type="ECO:0000250" key="1"/>
<evidence type="ECO:0000250" key="2">
    <source>
        <dbReference type="UniProtKB" id="Q9N1F0"/>
    </source>
</evidence>
<evidence type="ECO:0000255" key="3"/>
<evidence type="ECO:0000256" key="4">
    <source>
        <dbReference type="SAM" id="MobiDB-lite"/>
    </source>
</evidence>
<evidence type="ECO:0000269" key="5">
    <source>
    </source>
</evidence>
<evidence type="ECO:0000269" key="6">
    <source>
    </source>
</evidence>
<evidence type="ECO:0000269" key="7">
    <source>
    </source>
</evidence>
<evidence type="ECO:0000269" key="8">
    <source>
    </source>
</evidence>
<evidence type="ECO:0000269" key="9">
    <source>
    </source>
</evidence>
<evidence type="ECO:0000269" key="10">
    <source>
    </source>
</evidence>
<evidence type="ECO:0000303" key="11">
    <source>
    </source>
</evidence>
<evidence type="ECO:0000303" key="12">
    <source>
    </source>
</evidence>
<evidence type="ECO:0000305" key="13"/>
<evidence type="ECO:0007744" key="14">
    <source>
    </source>
</evidence>
<reference key="1">
    <citation type="journal article" date="1999" name="Oncogene">
        <title>Mrvi1, a common MRV integration site in BXH2 myeloid leukemias, encodes a protein with homology to a lymphoid-restricted membrane protein Jaw1.</title>
        <authorList>
            <person name="Shaughnessy J.D. Jr."/>
            <person name="Largaespada D.A."/>
            <person name="Tian E."/>
            <person name="Fletcher C.F."/>
            <person name="Cho B.C."/>
            <person name="Vyas P."/>
            <person name="Jenkins N.A."/>
            <person name="Copeland N.G."/>
        </authorList>
    </citation>
    <scope>NUCLEOTIDE SEQUENCE [MRNA] (ISOFORMS 1 AND 2)</scope>
    <scope>FUNCTION</scope>
    <scope>TISSUE SPECIFICITY</scope>
</reference>
<reference key="2">
    <citation type="journal article" date="2005" name="Science">
        <title>The transcriptional landscape of the mammalian genome.</title>
        <authorList>
            <person name="Carninci P."/>
            <person name="Kasukawa T."/>
            <person name="Katayama S."/>
            <person name="Gough J."/>
            <person name="Frith M.C."/>
            <person name="Maeda N."/>
            <person name="Oyama R."/>
            <person name="Ravasi T."/>
            <person name="Lenhard B."/>
            <person name="Wells C."/>
            <person name="Kodzius R."/>
            <person name="Shimokawa K."/>
            <person name="Bajic V.B."/>
            <person name="Brenner S.E."/>
            <person name="Batalov S."/>
            <person name="Forrest A.R."/>
            <person name="Zavolan M."/>
            <person name="Davis M.J."/>
            <person name="Wilming L.G."/>
            <person name="Aidinis V."/>
            <person name="Allen J.E."/>
            <person name="Ambesi-Impiombato A."/>
            <person name="Apweiler R."/>
            <person name="Aturaliya R.N."/>
            <person name="Bailey T.L."/>
            <person name="Bansal M."/>
            <person name="Baxter L."/>
            <person name="Beisel K.W."/>
            <person name="Bersano T."/>
            <person name="Bono H."/>
            <person name="Chalk A.M."/>
            <person name="Chiu K.P."/>
            <person name="Choudhary V."/>
            <person name="Christoffels A."/>
            <person name="Clutterbuck D.R."/>
            <person name="Crowe M.L."/>
            <person name="Dalla E."/>
            <person name="Dalrymple B.P."/>
            <person name="de Bono B."/>
            <person name="Della Gatta G."/>
            <person name="di Bernardo D."/>
            <person name="Down T."/>
            <person name="Engstrom P."/>
            <person name="Fagiolini M."/>
            <person name="Faulkner G."/>
            <person name="Fletcher C.F."/>
            <person name="Fukushima T."/>
            <person name="Furuno M."/>
            <person name="Futaki S."/>
            <person name="Gariboldi M."/>
            <person name="Georgii-Hemming P."/>
            <person name="Gingeras T.R."/>
            <person name="Gojobori T."/>
            <person name="Green R.E."/>
            <person name="Gustincich S."/>
            <person name="Harbers M."/>
            <person name="Hayashi Y."/>
            <person name="Hensch T.K."/>
            <person name="Hirokawa N."/>
            <person name="Hill D."/>
            <person name="Huminiecki L."/>
            <person name="Iacono M."/>
            <person name="Ikeo K."/>
            <person name="Iwama A."/>
            <person name="Ishikawa T."/>
            <person name="Jakt M."/>
            <person name="Kanapin A."/>
            <person name="Katoh M."/>
            <person name="Kawasawa Y."/>
            <person name="Kelso J."/>
            <person name="Kitamura H."/>
            <person name="Kitano H."/>
            <person name="Kollias G."/>
            <person name="Krishnan S.P."/>
            <person name="Kruger A."/>
            <person name="Kummerfeld S.K."/>
            <person name="Kurochkin I.V."/>
            <person name="Lareau L.F."/>
            <person name="Lazarevic D."/>
            <person name="Lipovich L."/>
            <person name="Liu J."/>
            <person name="Liuni S."/>
            <person name="McWilliam S."/>
            <person name="Madan Babu M."/>
            <person name="Madera M."/>
            <person name="Marchionni L."/>
            <person name="Matsuda H."/>
            <person name="Matsuzawa S."/>
            <person name="Miki H."/>
            <person name="Mignone F."/>
            <person name="Miyake S."/>
            <person name="Morris K."/>
            <person name="Mottagui-Tabar S."/>
            <person name="Mulder N."/>
            <person name="Nakano N."/>
            <person name="Nakauchi H."/>
            <person name="Ng P."/>
            <person name="Nilsson R."/>
            <person name="Nishiguchi S."/>
            <person name="Nishikawa S."/>
            <person name="Nori F."/>
            <person name="Ohara O."/>
            <person name="Okazaki Y."/>
            <person name="Orlando V."/>
            <person name="Pang K.C."/>
            <person name="Pavan W.J."/>
            <person name="Pavesi G."/>
            <person name="Pesole G."/>
            <person name="Petrovsky N."/>
            <person name="Piazza S."/>
            <person name="Reed J."/>
            <person name="Reid J.F."/>
            <person name="Ring B.Z."/>
            <person name="Ringwald M."/>
            <person name="Rost B."/>
            <person name="Ruan Y."/>
            <person name="Salzberg S.L."/>
            <person name="Sandelin A."/>
            <person name="Schneider C."/>
            <person name="Schoenbach C."/>
            <person name="Sekiguchi K."/>
            <person name="Semple C.A."/>
            <person name="Seno S."/>
            <person name="Sessa L."/>
            <person name="Sheng Y."/>
            <person name="Shibata Y."/>
            <person name="Shimada H."/>
            <person name="Shimada K."/>
            <person name="Silva D."/>
            <person name="Sinclair B."/>
            <person name="Sperling S."/>
            <person name="Stupka E."/>
            <person name="Sugiura K."/>
            <person name="Sultana R."/>
            <person name="Takenaka Y."/>
            <person name="Taki K."/>
            <person name="Tammoja K."/>
            <person name="Tan S.L."/>
            <person name="Tang S."/>
            <person name="Taylor M.S."/>
            <person name="Tegner J."/>
            <person name="Teichmann S.A."/>
            <person name="Ueda H.R."/>
            <person name="van Nimwegen E."/>
            <person name="Verardo R."/>
            <person name="Wei C.L."/>
            <person name="Yagi K."/>
            <person name="Yamanishi H."/>
            <person name="Zabarovsky E."/>
            <person name="Zhu S."/>
            <person name="Zimmer A."/>
            <person name="Hide W."/>
            <person name="Bult C."/>
            <person name="Grimmond S.M."/>
            <person name="Teasdale R.D."/>
            <person name="Liu E.T."/>
            <person name="Brusic V."/>
            <person name="Quackenbush J."/>
            <person name="Wahlestedt C."/>
            <person name="Mattick J.S."/>
            <person name="Hume D.A."/>
            <person name="Kai C."/>
            <person name="Sasaki D."/>
            <person name="Tomaru Y."/>
            <person name="Fukuda S."/>
            <person name="Kanamori-Katayama M."/>
            <person name="Suzuki M."/>
            <person name="Aoki J."/>
            <person name="Arakawa T."/>
            <person name="Iida J."/>
            <person name="Imamura K."/>
            <person name="Itoh M."/>
            <person name="Kato T."/>
            <person name="Kawaji H."/>
            <person name="Kawagashira N."/>
            <person name="Kawashima T."/>
            <person name="Kojima M."/>
            <person name="Kondo S."/>
            <person name="Konno H."/>
            <person name="Nakano K."/>
            <person name="Ninomiya N."/>
            <person name="Nishio T."/>
            <person name="Okada M."/>
            <person name="Plessy C."/>
            <person name="Shibata K."/>
            <person name="Shiraki T."/>
            <person name="Suzuki S."/>
            <person name="Tagami M."/>
            <person name="Waki K."/>
            <person name="Watahiki A."/>
            <person name="Okamura-Oho Y."/>
            <person name="Suzuki H."/>
            <person name="Kawai J."/>
            <person name="Hayashizaki Y."/>
        </authorList>
    </citation>
    <scope>NUCLEOTIDE SEQUENCE [LARGE SCALE MRNA] (ISOFORM 2)</scope>
    <scope>TISSUE SPECIFICITY</scope>
    <source>
        <strain>NOD</strain>
        <tissue>Spleen</tissue>
    </source>
</reference>
<reference key="3">
    <citation type="journal article" date="2009" name="PLoS Biol.">
        <title>Lineage-specific biology revealed by a finished genome assembly of the mouse.</title>
        <authorList>
            <person name="Church D.M."/>
            <person name="Goodstadt L."/>
            <person name="Hillier L.W."/>
            <person name="Zody M.C."/>
            <person name="Goldstein S."/>
            <person name="She X."/>
            <person name="Bult C.J."/>
            <person name="Agarwala R."/>
            <person name="Cherry J.L."/>
            <person name="DiCuccio M."/>
            <person name="Hlavina W."/>
            <person name="Kapustin Y."/>
            <person name="Meric P."/>
            <person name="Maglott D."/>
            <person name="Birtle Z."/>
            <person name="Marques A.C."/>
            <person name="Graves T."/>
            <person name="Zhou S."/>
            <person name="Teague B."/>
            <person name="Potamousis K."/>
            <person name="Churas C."/>
            <person name="Place M."/>
            <person name="Herschleb J."/>
            <person name="Runnheim R."/>
            <person name="Forrest D."/>
            <person name="Amos-Landgraf J."/>
            <person name="Schwartz D.C."/>
            <person name="Cheng Z."/>
            <person name="Lindblad-Toh K."/>
            <person name="Eichler E.E."/>
            <person name="Ponting C.P."/>
        </authorList>
    </citation>
    <scope>NUCLEOTIDE SEQUENCE [LARGE SCALE GENOMIC DNA]</scope>
    <source>
        <strain>C57BL/6J</strain>
    </source>
</reference>
<reference key="4">
    <citation type="journal article" date="2004" name="EMBO J.">
        <title>IRAG is essential for relaxation of receptor-triggered smooth muscle contraction by cGMP kinase.</title>
        <authorList>
            <person name="Geiselhoeringer A."/>
            <person name="Werner M."/>
            <person name="Sigl K."/>
            <person name="Smital P."/>
            <person name="Woerner R."/>
            <person name="Acheo L."/>
            <person name="Stieber J."/>
            <person name="Weinmeister P."/>
            <person name="Feil R."/>
            <person name="Feil S."/>
            <person name="Wegener J."/>
            <person name="Hofmann F."/>
            <person name="Schlossmann J."/>
        </authorList>
    </citation>
    <scope>FUNCTION</scope>
    <scope>REGION</scope>
    <scope>DISRUPTION PHENOTYPE</scope>
</reference>
<reference key="5">
    <citation type="journal article" date="2004" name="FEBS Lett.">
        <title>Distribution of IRAG and cGKI-isoforms in murine tissues.</title>
        <authorList>
            <person name="Geiselhoringer A."/>
            <person name="Gaisa M."/>
            <person name="Hofmann F."/>
            <person name="Schlossmann J."/>
        </authorList>
    </citation>
    <scope>FUNCTION</scope>
    <scope>TISSUE SPECIFICITY</scope>
    <scope>SUBCELLULAR LOCATION</scope>
</reference>
<reference key="6">
    <citation type="journal article" date="2007" name="Blood">
        <title>IRAG mediates NO/cGMP-dependent inhibition of platelet aggregation and thrombus formation.</title>
        <authorList>
            <person name="Antl M."/>
            <person name="von Bruehl M.-L."/>
            <person name="Eiglsperger C."/>
            <person name="Werner M."/>
            <person name="Konrad I."/>
            <person name="Kocher T."/>
            <person name="Wilm M."/>
            <person name="Hofmann F."/>
            <person name="Massberg S."/>
            <person name="Schlossmann J."/>
        </authorList>
    </citation>
    <scope>INTERACTION WITH PRKG1 AND ITPR1</scope>
    <scope>FUNCTION</scope>
    <scope>DISRUPTION PHENOTYPE</scope>
</reference>
<reference key="7">
    <citation type="journal article" date="2010" name="Cell">
        <title>A tissue-specific atlas of mouse protein phosphorylation and expression.</title>
        <authorList>
            <person name="Huttlin E.L."/>
            <person name="Jedrychowski M.P."/>
            <person name="Elias J.E."/>
            <person name="Goswami T."/>
            <person name="Rad R."/>
            <person name="Beausoleil S.A."/>
            <person name="Villen J."/>
            <person name="Haas W."/>
            <person name="Sowa M.E."/>
            <person name="Gygi S.P."/>
        </authorList>
    </citation>
    <scope>PHOSPHORYLATION [LARGE SCALE ANALYSIS] AT SER-382</scope>
    <scope>IDENTIFICATION BY MASS SPECTROMETRY [LARGE SCALE ANALYSIS]</scope>
    <source>
        <tissue>Brown adipose tissue</tissue>
        <tissue>Kidney</tissue>
        <tissue>Liver</tissue>
        <tissue>Lung</tissue>
        <tissue>Spleen</tissue>
        <tissue>Testis</tissue>
    </source>
</reference>
<reference key="8">
    <citation type="journal article" date="2020" name="Proc. Natl. Acad. Sci. U.S.A.">
        <title>Isoform-specific regulation of HCN4 channels by a family of endoplasmic reticulum proteins.</title>
        <authorList>
            <person name="Peters C.H."/>
            <person name="Myers M.E."/>
            <person name="Juchno J."/>
            <person name="Haimbaugh C."/>
            <person name="Bichraoui H."/>
            <person name="Du Y."/>
            <person name="Bankston J.R."/>
            <person name="Walker L.A."/>
            <person name="Proenza C."/>
        </authorList>
    </citation>
    <scope>INTERACTION WITH HCN4</scope>
    <scope>FUNCTION</scope>
</reference>
<sequence>MGRSLTCPFGISPACGAQASWSIFGVGTAEVPGTHSHSNQAAAMPHIPEDEEPPGEPQAAQTQDSPSAGPFPSPPTIVLTGDASSPEGETDKNLVNRAPSPHRRLSHRHLKVSTASLTSVDPSGHVIDLVNDQLPDISISEEDKKKNLALLEEAKLVSERFLTRRGRKSRSSLGDSPSAVSPNLSSGASPASSRSCSLTISTSPGLDICSGPQSPLPGAPPQQKGHEDGVSSPCPGEPNVSKGLADLKQNDQRKVSQGRLAPRSPTVEKTKELTVEQKENFDPLQHVEATPMAQASGASISGKMALNSPQPGPAEMELGRQLLKTAREGNPLPRTTAQGSGGTVSPHSLGQGSAGEPMGPKAGSKAELRSPVSRPPLIRGVSWDSSPEEPGPLLQKVLAKLPLAEEEKRFPGKAKPAKPPGLKDFQIQVQPVRMQKLTKLREEHILMRNQNLVGFKLPELSEAAEQDKGVSPELAPAAEEEESKSGLDVMPNISDILLRKLRVHKSLTGSAPPLTEKEVENVFVQLSLAFRNDSYTLESRINQAERERNLTEENTEKELENFKASITSSANIWYHCEHRETYQKLLEDIAVLHRLAARLSSRAEVVGAVRQEKRMSKATEVMMQYVENLKRTYEKDHAELMEFKKLANQNSSRSCGPSEDGVPRTARSMSLTMGKNMPRRRVSVAVVPKFNALNLPGQAPSSSPMPSLPALSESSNGKSSISVSPALPALLENGKTNAEANCEVGAPVPLPSCLEETSQETKAKAEEEAYSKGYQEGVKKTEELQDLKEEEEEEQKTESPEEPEEVEETQEDEKDQGSSKLEELVHFLQVMYPKLCQHWQVIWMMAAVMLVLSVVLGLYSSYNSCTEEADGPPGRSTCSAAQRDSWWSSGLQQELPAEQ</sequence>
<accession>Q9WUX5</accession>
<accession>Q3U069</accession>
<accession>Q9R2C5</accession>